<accession>Q4UTP2</accession>
<evidence type="ECO:0000255" key="1">
    <source>
        <dbReference type="HAMAP-Rule" id="MF_00318"/>
    </source>
</evidence>
<comment type="function">
    <text evidence="1">Catalyzes the reversible conversion of 2-phosphoglycerate (2-PG) into phosphoenolpyruvate (PEP). It is essential for the degradation of carbohydrates via glycolysis.</text>
</comment>
<comment type="catalytic activity">
    <reaction evidence="1">
        <text>(2R)-2-phosphoglycerate = phosphoenolpyruvate + H2O</text>
        <dbReference type="Rhea" id="RHEA:10164"/>
        <dbReference type="ChEBI" id="CHEBI:15377"/>
        <dbReference type="ChEBI" id="CHEBI:58289"/>
        <dbReference type="ChEBI" id="CHEBI:58702"/>
        <dbReference type="EC" id="4.2.1.11"/>
    </reaction>
</comment>
<comment type="cofactor">
    <cofactor evidence="1">
        <name>Mg(2+)</name>
        <dbReference type="ChEBI" id="CHEBI:18420"/>
    </cofactor>
    <text evidence="1">Binds a second Mg(2+) ion via substrate during catalysis.</text>
</comment>
<comment type="pathway">
    <text evidence="1">Carbohydrate degradation; glycolysis; pyruvate from D-glyceraldehyde 3-phosphate: step 4/5.</text>
</comment>
<comment type="subunit">
    <text evidence="1">Component of the RNA degradosome, a multiprotein complex involved in RNA processing and mRNA degradation.</text>
</comment>
<comment type="subcellular location">
    <subcellularLocation>
        <location evidence="1">Cytoplasm</location>
    </subcellularLocation>
    <subcellularLocation>
        <location evidence="1">Secreted</location>
    </subcellularLocation>
    <subcellularLocation>
        <location evidence="1">Cell surface</location>
    </subcellularLocation>
    <text evidence="1">Fractions of enolase are present in both the cytoplasm and on the cell surface.</text>
</comment>
<comment type="similarity">
    <text evidence="1">Belongs to the enolase family.</text>
</comment>
<proteinExistence type="inferred from homology"/>
<keyword id="KW-0963">Cytoplasm</keyword>
<keyword id="KW-0324">Glycolysis</keyword>
<keyword id="KW-0456">Lyase</keyword>
<keyword id="KW-0460">Magnesium</keyword>
<keyword id="KW-0479">Metal-binding</keyword>
<keyword id="KW-0964">Secreted</keyword>
<name>ENO_XANC8</name>
<organism>
    <name type="scientific">Xanthomonas campestris pv. campestris (strain 8004)</name>
    <dbReference type="NCBI Taxonomy" id="314565"/>
    <lineage>
        <taxon>Bacteria</taxon>
        <taxon>Pseudomonadati</taxon>
        <taxon>Pseudomonadota</taxon>
        <taxon>Gammaproteobacteria</taxon>
        <taxon>Lysobacterales</taxon>
        <taxon>Lysobacteraceae</taxon>
        <taxon>Xanthomonas</taxon>
    </lineage>
</organism>
<dbReference type="EC" id="4.2.1.11" evidence="1"/>
<dbReference type="EMBL" id="CP000050">
    <property type="protein sequence ID" value="AAY49581.1"/>
    <property type="molecule type" value="Genomic_DNA"/>
</dbReference>
<dbReference type="RefSeq" id="WP_011036877.1">
    <property type="nucleotide sequence ID" value="NZ_CP155948.1"/>
</dbReference>
<dbReference type="SMR" id="Q4UTP2"/>
<dbReference type="GeneID" id="58013747"/>
<dbReference type="KEGG" id="xcb:XC_2531"/>
<dbReference type="HOGENOM" id="CLU_031223_2_1_6"/>
<dbReference type="UniPathway" id="UPA00109">
    <property type="reaction ID" value="UER00187"/>
</dbReference>
<dbReference type="Proteomes" id="UP000000420">
    <property type="component" value="Chromosome"/>
</dbReference>
<dbReference type="GO" id="GO:0009986">
    <property type="term" value="C:cell surface"/>
    <property type="evidence" value="ECO:0007669"/>
    <property type="project" value="UniProtKB-SubCell"/>
</dbReference>
<dbReference type="GO" id="GO:0005576">
    <property type="term" value="C:extracellular region"/>
    <property type="evidence" value="ECO:0007669"/>
    <property type="project" value="UniProtKB-SubCell"/>
</dbReference>
<dbReference type="GO" id="GO:0000015">
    <property type="term" value="C:phosphopyruvate hydratase complex"/>
    <property type="evidence" value="ECO:0007669"/>
    <property type="project" value="InterPro"/>
</dbReference>
<dbReference type="GO" id="GO:0000287">
    <property type="term" value="F:magnesium ion binding"/>
    <property type="evidence" value="ECO:0007669"/>
    <property type="project" value="UniProtKB-UniRule"/>
</dbReference>
<dbReference type="GO" id="GO:0004634">
    <property type="term" value="F:phosphopyruvate hydratase activity"/>
    <property type="evidence" value="ECO:0007669"/>
    <property type="project" value="UniProtKB-UniRule"/>
</dbReference>
<dbReference type="GO" id="GO:0006096">
    <property type="term" value="P:glycolytic process"/>
    <property type="evidence" value="ECO:0007669"/>
    <property type="project" value="UniProtKB-UniRule"/>
</dbReference>
<dbReference type="CDD" id="cd03313">
    <property type="entry name" value="enolase"/>
    <property type="match status" value="1"/>
</dbReference>
<dbReference type="FunFam" id="3.20.20.120:FF:000001">
    <property type="entry name" value="Enolase"/>
    <property type="match status" value="1"/>
</dbReference>
<dbReference type="FunFam" id="3.30.390.10:FF:000001">
    <property type="entry name" value="Enolase"/>
    <property type="match status" value="1"/>
</dbReference>
<dbReference type="Gene3D" id="3.20.20.120">
    <property type="entry name" value="Enolase-like C-terminal domain"/>
    <property type="match status" value="1"/>
</dbReference>
<dbReference type="Gene3D" id="3.30.390.10">
    <property type="entry name" value="Enolase-like, N-terminal domain"/>
    <property type="match status" value="1"/>
</dbReference>
<dbReference type="HAMAP" id="MF_00318">
    <property type="entry name" value="Enolase"/>
    <property type="match status" value="1"/>
</dbReference>
<dbReference type="InterPro" id="IPR000941">
    <property type="entry name" value="Enolase"/>
</dbReference>
<dbReference type="InterPro" id="IPR036849">
    <property type="entry name" value="Enolase-like_C_sf"/>
</dbReference>
<dbReference type="InterPro" id="IPR029017">
    <property type="entry name" value="Enolase-like_N"/>
</dbReference>
<dbReference type="InterPro" id="IPR020810">
    <property type="entry name" value="Enolase_C"/>
</dbReference>
<dbReference type="InterPro" id="IPR020809">
    <property type="entry name" value="Enolase_CS"/>
</dbReference>
<dbReference type="InterPro" id="IPR020811">
    <property type="entry name" value="Enolase_N"/>
</dbReference>
<dbReference type="NCBIfam" id="TIGR01060">
    <property type="entry name" value="eno"/>
    <property type="match status" value="1"/>
</dbReference>
<dbReference type="PANTHER" id="PTHR11902">
    <property type="entry name" value="ENOLASE"/>
    <property type="match status" value="1"/>
</dbReference>
<dbReference type="PANTHER" id="PTHR11902:SF1">
    <property type="entry name" value="ENOLASE"/>
    <property type="match status" value="1"/>
</dbReference>
<dbReference type="Pfam" id="PF00113">
    <property type="entry name" value="Enolase_C"/>
    <property type="match status" value="1"/>
</dbReference>
<dbReference type="Pfam" id="PF03952">
    <property type="entry name" value="Enolase_N"/>
    <property type="match status" value="1"/>
</dbReference>
<dbReference type="PIRSF" id="PIRSF001400">
    <property type="entry name" value="Enolase"/>
    <property type="match status" value="1"/>
</dbReference>
<dbReference type="PRINTS" id="PR00148">
    <property type="entry name" value="ENOLASE"/>
</dbReference>
<dbReference type="SFLD" id="SFLDS00001">
    <property type="entry name" value="Enolase"/>
    <property type="match status" value="1"/>
</dbReference>
<dbReference type="SFLD" id="SFLDF00002">
    <property type="entry name" value="enolase"/>
    <property type="match status" value="1"/>
</dbReference>
<dbReference type="SMART" id="SM01192">
    <property type="entry name" value="Enolase_C"/>
    <property type="match status" value="1"/>
</dbReference>
<dbReference type="SMART" id="SM01193">
    <property type="entry name" value="Enolase_N"/>
    <property type="match status" value="1"/>
</dbReference>
<dbReference type="SUPFAM" id="SSF51604">
    <property type="entry name" value="Enolase C-terminal domain-like"/>
    <property type="match status" value="1"/>
</dbReference>
<dbReference type="SUPFAM" id="SSF54826">
    <property type="entry name" value="Enolase N-terminal domain-like"/>
    <property type="match status" value="1"/>
</dbReference>
<dbReference type="PROSITE" id="PS00164">
    <property type="entry name" value="ENOLASE"/>
    <property type="match status" value="1"/>
</dbReference>
<feature type="chain" id="PRO_0000267135" description="Enolase">
    <location>
        <begin position="1"/>
        <end position="430"/>
    </location>
</feature>
<feature type="active site" description="Proton donor" evidence="1">
    <location>
        <position position="207"/>
    </location>
</feature>
<feature type="active site" description="Proton acceptor" evidence="1">
    <location>
        <position position="339"/>
    </location>
</feature>
<feature type="binding site" evidence="1">
    <location>
        <position position="165"/>
    </location>
    <ligand>
        <name>(2R)-2-phosphoglycerate</name>
        <dbReference type="ChEBI" id="CHEBI:58289"/>
    </ligand>
</feature>
<feature type="binding site" evidence="1">
    <location>
        <position position="244"/>
    </location>
    <ligand>
        <name>Mg(2+)</name>
        <dbReference type="ChEBI" id="CHEBI:18420"/>
    </ligand>
</feature>
<feature type="binding site" evidence="1">
    <location>
        <position position="287"/>
    </location>
    <ligand>
        <name>Mg(2+)</name>
        <dbReference type="ChEBI" id="CHEBI:18420"/>
    </ligand>
</feature>
<feature type="binding site" evidence="1">
    <location>
        <position position="314"/>
    </location>
    <ligand>
        <name>Mg(2+)</name>
        <dbReference type="ChEBI" id="CHEBI:18420"/>
    </ligand>
</feature>
<feature type="binding site" evidence="1">
    <location>
        <position position="339"/>
    </location>
    <ligand>
        <name>(2R)-2-phosphoglycerate</name>
        <dbReference type="ChEBI" id="CHEBI:58289"/>
    </ligand>
</feature>
<feature type="binding site" evidence="1">
    <location>
        <position position="368"/>
    </location>
    <ligand>
        <name>(2R)-2-phosphoglycerate</name>
        <dbReference type="ChEBI" id="CHEBI:58289"/>
    </ligand>
</feature>
<feature type="binding site" evidence="1">
    <location>
        <position position="369"/>
    </location>
    <ligand>
        <name>(2R)-2-phosphoglycerate</name>
        <dbReference type="ChEBI" id="CHEBI:58289"/>
    </ligand>
</feature>
<feature type="binding site" evidence="1">
    <location>
        <position position="390"/>
    </location>
    <ligand>
        <name>(2R)-2-phosphoglycerate</name>
        <dbReference type="ChEBI" id="CHEBI:58289"/>
    </ligand>
</feature>
<reference key="1">
    <citation type="journal article" date="2005" name="Genome Res.">
        <title>Comparative and functional genomic analyses of the pathogenicity of phytopathogen Xanthomonas campestris pv. campestris.</title>
        <authorList>
            <person name="Qian W."/>
            <person name="Jia Y."/>
            <person name="Ren S.-X."/>
            <person name="He Y.-Q."/>
            <person name="Feng J.-X."/>
            <person name="Lu L.-F."/>
            <person name="Sun Q."/>
            <person name="Ying G."/>
            <person name="Tang D.-J."/>
            <person name="Tang H."/>
            <person name="Wu W."/>
            <person name="Hao P."/>
            <person name="Wang L."/>
            <person name="Jiang B.-L."/>
            <person name="Zeng S."/>
            <person name="Gu W.-Y."/>
            <person name="Lu G."/>
            <person name="Rong L."/>
            <person name="Tian Y."/>
            <person name="Yao Z."/>
            <person name="Fu G."/>
            <person name="Chen B."/>
            <person name="Fang R."/>
            <person name="Qiang B."/>
            <person name="Chen Z."/>
            <person name="Zhao G.-P."/>
            <person name="Tang J.-L."/>
            <person name="He C."/>
        </authorList>
    </citation>
    <scope>NUCLEOTIDE SEQUENCE [LARGE SCALE GENOMIC DNA]</scope>
    <source>
        <strain>8004</strain>
    </source>
</reference>
<protein>
    <recommendedName>
        <fullName evidence="1">Enolase</fullName>
        <ecNumber evidence="1">4.2.1.11</ecNumber>
    </recommendedName>
    <alternativeName>
        <fullName evidence="1">2-phospho-D-glycerate hydro-lyase</fullName>
    </alternativeName>
    <alternativeName>
        <fullName evidence="1">2-phosphoglycerate dehydratase</fullName>
    </alternativeName>
</protein>
<gene>
    <name evidence="1" type="primary">eno</name>
    <name type="ordered locus">XC_2531</name>
</gene>
<sequence>MTTIAKILAREILDSRGNPTLEAEVTLADGSFGRAAVPSGASTGTKEAVELRDGDKTRYLGKGVRKAVENVNGTIAETLKDFDAADQQGLDRRLIDLDGTENKGRLGANALLGVSLAAAHAVAASRKQPLWQYLSTITESDVALPVPMMNIINGGAHADNNVDFQEFMVLPVGCSSFSEALRAGTEIFHSLKSVLKGHGLSTAVGDEGGFAPDFRSNVEALDTILEAIGKAGYTAGEDILLGLDVASSEFYDNGKYNLVGENKRLTSEQFVDFLADWVAQYPIISIEDGLAEDDWAGWKLLTDRVGKKVQLVGDDLFVTNPKIFKEGIDSGTANAILIKVNQIGTLTETLEAIAMAHAANYASIVSHRSGETEDTTIADIAVATTATQIKTGSLCRSDRVAKYNQLLRIEQALGSGARYAGRDAFVSLKR</sequence>